<keyword id="KW-0002">3D-structure</keyword>
<keyword id="KW-0520">NAD</keyword>
<keyword id="KW-0560">Oxidoreductase</keyword>
<keyword id="KW-1185">Reference proteome</keyword>
<gene>
    <name evidence="1" type="primary">rocA</name>
    <name type="ordered locus">BLi00374</name>
    <name type="ordered locus">BL01710</name>
</gene>
<proteinExistence type="evidence at protein level"/>
<organism>
    <name type="scientific">Bacillus licheniformis (strain ATCC 14580 / DSM 13 / JCM 2505 / CCUG 7422 / NBRC 12200 / NCIMB 9375 / NCTC 10341 / NRRL NRS-1264 / Gibson 46)</name>
    <dbReference type="NCBI Taxonomy" id="279010"/>
    <lineage>
        <taxon>Bacteria</taxon>
        <taxon>Bacillati</taxon>
        <taxon>Bacillota</taxon>
        <taxon>Bacilli</taxon>
        <taxon>Bacillales</taxon>
        <taxon>Bacillaceae</taxon>
        <taxon>Bacillus</taxon>
    </lineage>
</organism>
<sequence>MTTPYKHEPFTNFGIEENRKAFEKALETVNNEWLGQSYPLVIDGERYETENKIVSINPANKEEVVGTVSKATQDHAEKAIQAAAKAFETWRYTDPEERAAVLFRAVAKVRRKKHEFSALLVKEAGKPWNEADADTAEAIDFMEYYARQMIELAKGKPVNSREGERNQYVYTPTGVTVVIPPWNFLFAIMAGTTVAPIVTGNTVVLKPASAAPVIAAKFVEVLEESGLPKGVVNFVPGSGAEVGDYLVDHPKTSIITFTGSREVGTRIFERAAKVQPGQTHLKQVIAEMGGKDTVVVDEDCDIELAAQSIFTSAFGFAGQKCSAGSRAVVHEKVYDEVLKRVIEITESKKVGEPDSADVYMGPVIDQASFNKIMDYIEIGKEEGRLVSGGKGDDSKGYFIEPTIFADLDPKARLMQEEIFGPVVAFSKVSSFDEALEVANNTEYGLTGAVITKNRDHINRAKQEFHVGNLYFNRNCTGAIVGYHPFGGFKMSGTDSKAGGPDYLALHMQAKTISEMF</sequence>
<protein>
    <recommendedName>
        <fullName evidence="1">1-pyrroline-5-carboxylate dehydrogenase</fullName>
        <shortName evidence="1">P5C dehydrogenase</shortName>
        <ecNumber evidence="1">1.2.1.88</ecNumber>
    </recommendedName>
    <alternativeName>
        <fullName evidence="1">L-glutamate gamma-semialdehyde dehydrogenase</fullName>
    </alternativeName>
</protein>
<reference key="1">
    <citation type="journal article" date="2004" name="J. Mol. Microbiol. Biotechnol.">
        <title>The complete genome sequence of Bacillus licheniformis DSM13, an organism with great industrial potential.</title>
        <authorList>
            <person name="Veith B."/>
            <person name="Herzberg C."/>
            <person name="Steckel S."/>
            <person name="Feesche J."/>
            <person name="Maurer K.H."/>
            <person name="Ehrenreich P."/>
            <person name="Baeumer S."/>
            <person name="Henne A."/>
            <person name="Liesegang H."/>
            <person name="Merkl R."/>
            <person name="Ehrenreich A."/>
            <person name="Gottschalk G."/>
        </authorList>
    </citation>
    <scope>NUCLEOTIDE SEQUENCE [LARGE SCALE GENOMIC DNA]</scope>
    <source>
        <strain>ATCC 14580 / DSM 13 / JCM 2505 / CCUG 7422 / NBRC 12200 / NCIMB 9375 / NCTC 10341 / NRRL NRS-1264 / Gibson 46</strain>
    </source>
</reference>
<reference key="2">
    <citation type="journal article" date="2004" name="Genome Biol.">
        <title>Complete genome sequence of the industrial bacterium Bacillus licheniformis and comparisons with closely related Bacillus species.</title>
        <authorList>
            <person name="Rey M.W."/>
            <person name="Ramaiya P."/>
            <person name="Nelson B.A."/>
            <person name="Brody-Karpin S.D."/>
            <person name="Zaretsky E.J."/>
            <person name="Tang M."/>
            <person name="Lopez de Leon A."/>
            <person name="Xiang H."/>
            <person name="Gusti V."/>
            <person name="Clausen I.G."/>
            <person name="Olsen P.B."/>
            <person name="Rasmussen M.D."/>
            <person name="Andersen J.T."/>
            <person name="Joergensen P.L."/>
            <person name="Larsen T.S."/>
            <person name="Sorokin A."/>
            <person name="Bolotin A."/>
            <person name="Lapidus A."/>
            <person name="Galleron N."/>
            <person name="Ehrlich S.D."/>
            <person name="Berka R.M."/>
        </authorList>
    </citation>
    <scope>NUCLEOTIDE SEQUENCE [LARGE SCALE GENOMIC DNA]</scope>
    <source>
        <strain>ATCC 14580 / DSM 13 / JCM 2505 / CCUG 7422 / NBRC 12200 / NCIMB 9375 / NCTC 10341 / NRRL NRS-1264 / Gibson 46</strain>
    </source>
</reference>
<dbReference type="EC" id="1.2.1.88" evidence="1"/>
<dbReference type="EMBL" id="AE017333">
    <property type="protein sequence ID" value="AAU39332.1"/>
    <property type="molecule type" value="Genomic_DNA"/>
</dbReference>
<dbReference type="EMBL" id="CP000002">
    <property type="protein sequence ID" value="AAU21978.1"/>
    <property type="molecule type" value="Genomic_DNA"/>
</dbReference>
<dbReference type="PDB" id="3RJL">
    <property type="method" value="X-ray"/>
    <property type="resolution" value="2.20 A"/>
    <property type="chains" value="A/B/C/D/E/F/G/H=1-516"/>
</dbReference>
<dbReference type="PDBsum" id="3RJL"/>
<dbReference type="SMR" id="Q65NN2"/>
<dbReference type="STRING" id="279010.BL01710"/>
<dbReference type="KEGG" id="bld:BLi00374"/>
<dbReference type="KEGG" id="bli:BL01710"/>
<dbReference type="PATRIC" id="fig|279010.13.peg.361"/>
<dbReference type="eggNOG" id="COG1012">
    <property type="taxonomic scope" value="Bacteria"/>
</dbReference>
<dbReference type="HOGENOM" id="CLU_005391_0_0_9"/>
<dbReference type="BRENDA" id="1.2.1.88">
    <property type="organism ID" value="669"/>
</dbReference>
<dbReference type="UniPathway" id="UPA00261">
    <property type="reaction ID" value="UER00374"/>
</dbReference>
<dbReference type="EvolutionaryTrace" id="Q65NN2"/>
<dbReference type="Proteomes" id="UP000000606">
    <property type="component" value="Chromosome"/>
</dbReference>
<dbReference type="GO" id="GO:0009898">
    <property type="term" value="C:cytoplasmic side of plasma membrane"/>
    <property type="evidence" value="ECO:0007669"/>
    <property type="project" value="TreeGrafter"/>
</dbReference>
<dbReference type="GO" id="GO:0003842">
    <property type="term" value="F:1-pyrroline-5-carboxylate dehydrogenase activity"/>
    <property type="evidence" value="ECO:0007669"/>
    <property type="project" value="UniProtKB-UniRule"/>
</dbReference>
<dbReference type="GO" id="GO:0006537">
    <property type="term" value="P:glutamate biosynthetic process"/>
    <property type="evidence" value="ECO:0007669"/>
    <property type="project" value="UniProtKB-UniRule"/>
</dbReference>
<dbReference type="GO" id="GO:0010133">
    <property type="term" value="P:proline catabolic process to glutamate"/>
    <property type="evidence" value="ECO:0007669"/>
    <property type="project" value="UniProtKB-UniPathway"/>
</dbReference>
<dbReference type="CDD" id="cd07124">
    <property type="entry name" value="ALDH_PutA-P5CDH-RocA"/>
    <property type="match status" value="1"/>
</dbReference>
<dbReference type="FunFam" id="3.40.309.10:FF:000005">
    <property type="entry name" value="1-pyrroline-5-carboxylate dehydrogenase 1"/>
    <property type="match status" value="1"/>
</dbReference>
<dbReference type="FunFam" id="3.40.605.10:FF:000045">
    <property type="entry name" value="1-pyrroline-5-carboxylate dehydrogenase 1"/>
    <property type="match status" value="1"/>
</dbReference>
<dbReference type="Gene3D" id="3.40.605.10">
    <property type="entry name" value="Aldehyde Dehydrogenase, Chain A, domain 1"/>
    <property type="match status" value="1"/>
</dbReference>
<dbReference type="Gene3D" id="3.40.309.10">
    <property type="entry name" value="Aldehyde Dehydrogenase, Chain A, domain 2"/>
    <property type="match status" value="1"/>
</dbReference>
<dbReference type="HAMAP" id="MF_00733">
    <property type="entry name" value="RocA"/>
    <property type="match status" value="1"/>
</dbReference>
<dbReference type="InterPro" id="IPR016161">
    <property type="entry name" value="Ald_DH/histidinol_DH"/>
</dbReference>
<dbReference type="InterPro" id="IPR016163">
    <property type="entry name" value="Ald_DH_C"/>
</dbReference>
<dbReference type="InterPro" id="IPR016160">
    <property type="entry name" value="Ald_DH_CS_CYS"/>
</dbReference>
<dbReference type="InterPro" id="IPR029510">
    <property type="entry name" value="Ald_DH_CS_GLU"/>
</dbReference>
<dbReference type="InterPro" id="IPR016162">
    <property type="entry name" value="Ald_DH_N"/>
</dbReference>
<dbReference type="InterPro" id="IPR015590">
    <property type="entry name" value="Aldehyde_DH_dom"/>
</dbReference>
<dbReference type="InterPro" id="IPR050485">
    <property type="entry name" value="Proline_metab_enzyme"/>
</dbReference>
<dbReference type="InterPro" id="IPR005932">
    <property type="entry name" value="RocA"/>
</dbReference>
<dbReference type="InterPro" id="IPR047597">
    <property type="entry name" value="RocA_bacillales"/>
</dbReference>
<dbReference type="NCBIfam" id="TIGR01237">
    <property type="entry name" value="D1pyr5carbox2"/>
    <property type="match status" value="1"/>
</dbReference>
<dbReference type="NCBIfam" id="NF002852">
    <property type="entry name" value="PRK03137.1"/>
    <property type="match status" value="1"/>
</dbReference>
<dbReference type="PANTHER" id="PTHR42862">
    <property type="entry name" value="DELTA-1-PYRROLINE-5-CARBOXYLATE DEHYDROGENASE 1, ISOFORM A-RELATED"/>
    <property type="match status" value="1"/>
</dbReference>
<dbReference type="PANTHER" id="PTHR42862:SF1">
    <property type="entry name" value="DELTA-1-PYRROLINE-5-CARBOXYLATE DEHYDROGENASE 2, ISOFORM A-RELATED"/>
    <property type="match status" value="1"/>
</dbReference>
<dbReference type="Pfam" id="PF00171">
    <property type="entry name" value="Aldedh"/>
    <property type="match status" value="1"/>
</dbReference>
<dbReference type="SUPFAM" id="SSF53720">
    <property type="entry name" value="ALDH-like"/>
    <property type="match status" value="1"/>
</dbReference>
<dbReference type="PROSITE" id="PS00070">
    <property type="entry name" value="ALDEHYDE_DEHYDR_CYS"/>
    <property type="match status" value="1"/>
</dbReference>
<dbReference type="PROSITE" id="PS00687">
    <property type="entry name" value="ALDEHYDE_DEHYDR_GLU"/>
    <property type="match status" value="1"/>
</dbReference>
<feature type="chain" id="PRO_0000056510" description="1-pyrroline-5-carboxylate dehydrogenase">
    <location>
        <begin position="1"/>
        <end position="516"/>
    </location>
</feature>
<feature type="active site" evidence="1">
    <location>
        <position position="287"/>
    </location>
</feature>
<feature type="active site" evidence="1">
    <location>
        <position position="321"/>
    </location>
</feature>
<feature type="helix" evidence="2">
    <location>
        <begin position="16"/>
        <end position="31"/>
    </location>
</feature>
<feature type="turn" evidence="2">
    <location>
        <begin position="32"/>
        <end position="35"/>
    </location>
</feature>
<feature type="strand" evidence="2">
    <location>
        <begin position="36"/>
        <end position="38"/>
    </location>
</feature>
<feature type="strand" evidence="2">
    <location>
        <begin position="40"/>
        <end position="42"/>
    </location>
</feature>
<feature type="strand" evidence="2">
    <location>
        <begin position="45"/>
        <end position="47"/>
    </location>
</feature>
<feature type="strand" evidence="2">
    <location>
        <begin position="50"/>
        <end position="57"/>
    </location>
</feature>
<feature type="strand" evidence="2">
    <location>
        <begin position="60"/>
        <end position="69"/>
    </location>
</feature>
<feature type="helix" evidence="2">
    <location>
        <begin position="73"/>
        <end position="90"/>
    </location>
</feature>
<feature type="helix" evidence="2">
    <location>
        <begin position="96"/>
        <end position="111"/>
    </location>
</feature>
<feature type="helix" evidence="2">
    <location>
        <begin position="113"/>
        <end position="124"/>
    </location>
</feature>
<feature type="helix" evidence="2">
    <location>
        <begin position="128"/>
        <end position="152"/>
    </location>
</feature>
<feature type="strand" evidence="2">
    <location>
        <begin position="164"/>
        <end position="172"/>
    </location>
</feature>
<feature type="strand" evidence="2">
    <location>
        <begin position="175"/>
        <end position="179"/>
    </location>
</feature>
<feature type="turn" evidence="2">
    <location>
        <begin position="183"/>
        <end position="186"/>
    </location>
</feature>
<feature type="helix" evidence="2">
    <location>
        <begin position="187"/>
        <end position="198"/>
    </location>
</feature>
<feature type="strand" evidence="2">
    <location>
        <begin position="202"/>
        <end position="205"/>
    </location>
</feature>
<feature type="helix" evidence="2">
    <location>
        <begin position="213"/>
        <end position="223"/>
    </location>
</feature>
<feature type="turn" evidence="2">
    <location>
        <begin position="224"/>
        <end position="226"/>
    </location>
</feature>
<feature type="strand" evidence="2">
    <location>
        <begin position="231"/>
        <end position="234"/>
    </location>
</feature>
<feature type="turn" evidence="2">
    <location>
        <begin position="239"/>
        <end position="241"/>
    </location>
</feature>
<feature type="helix" evidence="2">
    <location>
        <begin position="242"/>
        <end position="248"/>
    </location>
</feature>
<feature type="strand" evidence="2">
    <location>
        <begin position="252"/>
        <end position="259"/>
    </location>
</feature>
<feature type="helix" evidence="2">
    <location>
        <begin position="261"/>
        <end position="272"/>
    </location>
</feature>
<feature type="strand" evidence="2">
    <location>
        <begin position="283"/>
        <end position="287"/>
    </location>
</feature>
<feature type="strand" evidence="2">
    <location>
        <begin position="293"/>
        <end position="296"/>
    </location>
</feature>
<feature type="strand" evidence="2">
    <location>
        <begin position="298"/>
        <end position="300"/>
    </location>
</feature>
<feature type="helix" evidence="2">
    <location>
        <begin position="302"/>
        <end position="314"/>
    </location>
</feature>
<feature type="helix" evidence="2">
    <location>
        <begin position="315"/>
        <end position="318"/>
    </location>
</feature>
<feature type="strand" evidence="2">
    <location>
        <begin position="326"/>
        <end position="330"/>
    </location>
</feature>
<feature type="turn" evidence="2">
    <location>
        <begin position="331"/>
        <end position="333"/>
    </location>
</feature>
<feature type="helix" evidence="2">
    <location>
        <begin position="334"/>
        <end position="345"/>
    </location>
</feature>
<feature type="strand" evidence="2">
    <location>
        <begin position="348"/>
        <end position="351"/>
    </location>
</feature>
<feature type="strand" evidence="2">
    <location>
        <begin position="358"/>
        <end position="360"/>
    </location>
</feature>
<feature type="helix" evidence="2">
    <location>
        <begin position="366"/>
        <end position="382"/>
    </location>
</feature>
<feature type="strand" evidence="2">
    <location>
        <begin position="383"/>
        <end position="387"/>
    </location>
</feature>
<feature type="strand" evidence="2">
    <location>
        <begin position="394"/>
        <end position="396"/>
    </location>
</feature>
<feature type="strand" evidence="2">
    <location>
        <begin position="402"/>
        <end position="406"/>
    </location>
</feature>
<feature type="helix" evidence="2">
    <location>
        <begin position="412"/>
        <end position="414"/>
    </location>
</feature>
<feature type="strand" evidence="2">
    <location>
        <begin position="420"/>
        <end position="430"/>
    </location>
</feature>
<feature type="helix" evidence="2">
    <location>
        <begin position="431"/>
        <end position="438"/>
    </location>
</feature>
<feature type="strand" evidence="2">
    <location>
        <begin position="441"/>
        <end position="450"/>
    </location>
</feature>
<feature type="helix" evidence="2">
    <location>
        <begin position="454"/>
        <end position="463"/>
    </location>
</feature>
<feature type="strand" evidence="2">
    <location>
        <begin position="467"/>
        <end position="473"/>
    </location>
</feature>
<feature type="turn" evidence="2">
    <location>
        <begin position="480"/>
        <end position="482"/>
    </location>
</feature>
<feature type="strand" evidence="2">
    <location>
        <begin position="499"/>
        <end position="502"/>
    </location>
</feature>
<feature type="helix" evidence="2">
    <location>
        <begin position="503"/>
        <end position="506"/>
    </location>
</feature>
<feature type="strand" evidence="2">
    <location>
        <begin position="507"/>
        <end position="515"/>
    </location>
</feature>
<name>ROCA_BACLD</name>
<evidence type="ECO:0000255" key="1">
    <source>
        <dbReference type="HAMAP-Rule" id="MF_00733"/>
    </source>
</evidence>
<evidence type="ECO:0007829" key="2">
    <source>
        <dbReference type="PDB" id="3RJL"/>
    </source>
</evidence>
<comment type="catalytic activity">
    <reaction evidence="1">
        <text>L-glutamate 5-semialdehyde + NAD(+) + H2O = L-glutamate + NADH + 2 H(+)</text>
        <dbReference type="Rhea" id="RHEA:30235"/>
        <dbReference type="ChEBI" id="CHEBI:15377"/>
        <dbReference type="ChEBI" id="CHEBI:15378"/>
        <dbReference type="ChEBI" id="CHEBI:29985"/>
        <dbReference type="ChEBI" id="CHEBI:57540"/>
        <dbReference type="ChEBI" id="CHEBI:57945"/>
        <dbReference type="ChEBI" id="CHEBI:58066"/>
        <dbReference type="EC" id="1.2.1.88"/>
    </reaction>
</comment>
<comment type="pathway">
    <text evidence="1">Amino-acid degradation; L-proline degradation into L-glutamate; L-glutamate from L-proline: step 2/2.</text>
</comment>
<comment type="similarity">
    <text evidence="1">Belongs to the aldehyde dehydrogenase family. RocA subfamily.</text>
</comment>
<accession>Q65NN2</accession>
<accession>Q62Z30</accession>